<proteinExistence type="evidence at transcript level"/>
<evidence type="ECO:0000250" key="1"/>
<evidence type="ECO:0000250" key="2">
    <source>
        <dbReference type="UniProtKB" id="O15264"/>
    </source>
</evidence>
<evidence type="ECO:0000255" key="3">
    <source>
        <dbReference type="PROSITE-ProRule" id="PRU00159"/>
    </source>
</evidence>
<evidence type="ECO:0000305" key="4"/>
<protein>
    <recommendedName>
        <fullName>Mitogen-activated protein kinase 13</fullName>
        <shortName>MAP kinase 13</shortName>
        <shortName>MAPK 13</shortName>
        <ecNumber>2.7.11.24</ecNumber>
    </recommendedName>
</protein>
<feature type="chain" id="PRO_0000246181" description="Mitogen-activated protein kinase 13">
    <location>
        <begin position="1"/>
        <end position="366"/>
    </location>
</feature>
<feature type="domain" description="Protein kinase" evidence="3">
    <location>
        <begin position="25"/>
        <end position="308"/>
    </location>
</feature>
<feature type="short sequence motif" description="TXY">
    <location>
        <begin position="180"/>
        <end position="182"/>
    </location>
</feature>
<feature type="active site" description="Proton acceptor" evidence="3">
    <location>
        <position position="150"/>
    </location>
</feature>
<feature type="binding site" evidence="3">
    <location>
        <begin position="31"/>
        <end position="39"/>
    </location>
    <ligand>
        <name>ATP</name>
        <dbReference type="ChEBI" id="CHEBI:30616"/>
    </ligand>
</feature>
<feature type="binding site" evidence="3">
    <location>
        <position position="54"/>
    </location>
    <ligand>
        <name>ATP</name>
        <dbReference type="ChEBI" id="CHEBI:30616"/>
    </ligand>
</feature>
<feature type="modified residue" description="Phosphoserine" evidence="2">
    <location>
        <position position="47"/>
    </location>
</feature>
<feature type="modified residue" description="Phosphothreonine; by MAP2K3, MAP2K4, MAP2K6 and MAP2K7" evidence="2">
    <location>
        <position position="180"/>
    </location>
</feature>
<feature type="modified residue" description="Phosphotyrosine; by MAP2K3, MAP2K4, MAP2K6 and MAP2K7" evidence="2">
    <location>
        <position position="182"/>
    </location>
</feature>
<feature type="modified residue" description="Phosphoserine" evidence="2">
    <location>
        <position position="350"/>
    </location>
</feature>
<dbReference type="EC" id="2.7.11.24"/>
<dbReference type="EMBL" id="BC102319">
    <property type="protein sequence ID" value="AAI02320.1"/>
    <property type="molecule type" value="mRNA"/>
</dbReference>
<dbReference type="SMR" id="Q3T0N5"/>
<dbReference type="FunCoup" id="Q3T0N5">
    <property type="interactions" value="277"/>
</dbReference>
<dbReference type="STRING" id="9913.ENSBTAP00000013198"/>
<dbReference type="PaxDb" id="9913-ENSBTAP00000013198"/>
<dbReference type="eggNOG" id="KOG0660">
    <property type="taxonomic scope" value="Eukaryota"/>
</dbReference>
<dbReference type="InParanoid" id="Q3T0N5"/>
<dbReference type="OrthoDB" id="192887at2759"/>
<dbReference type="Proteomes" id="UP000009136">
    <property type="component" value="Unplaced"/>
</dbReference>
<dbReference type="GO" id="GO:0005737">
    <property type="term" value="C:cytoplasm"/>
    <property type="evidence" value="ECO:0000318"/>
    <property type="project" value="GO_Central"/>
</dbReference>
<dbReference type="GO" id="GO:0005634">
    <property type="term" value="C:nucleus"/>
    <property type="evidence" value="ECO:0000318"/>
    <property type="project" value="GO_Central"/>
</dbReference>
<dbReference type="GO" id="GO:0005524">
    <property type="term" value="F:ATP binding"/>
    <property type="evidence" value="ECO:0007669"/>
    <property type="project" value="UniProtKB-KW"/>
</dbReference>
<dbReference type="GO" id="GO:0004707">
    <property type="term" value="F:MAP kinase activity"/>
    <property type="evidence" value="ECO:0007669"/>
    <property type="project" value="UniProtKB-EC"/>
</dbReference>
<dbReference type="GO" id="GO:0106310">
    <property type="term" value="F:protein serine kinase activity"/>
    <property type="evidence" value="ECO:0007669"/>
    <property type="project" value="RHEA"/>
</dbReference>
<dbReference type="GO" id="GO:0004674">
    <property type="term" value="F:protein serine/threonine kinase activity"/>
    <property type="evidence" value="ECO:0000318"/>
    <property type="project" value="GO_Central"/>
</dbReference>
<dbReference type="GO" id="GO:0035556">
    <property type="term" value="P:intracellular signal transduction"/>
    <property type="evidence" value="ECO:0000318"/>
    <property type="project" value="GO_Central"/>
</dbReference>
<dbReference type="CDD" id="cd07879">
    <property type="entry name" value="STKc_p38delta"/>
    <property type="match status" value="1"/>
</dbReference>
<dbReference type="FunFam" id="1.10.510.10:FF:000170">
    <property type="entry name" value="Mitogen-activated protein kinase"/>
    <property type="match status" value="1"/>
</dbReference>
<dbReference type="FunFam" id="3.30.200.20:FF:000769">
    <property type="entry name" value="Mitogen-activated protein kinase 14"/>
    <property type="match status" value="1"/>
</dbReference>
<dbReference type="Gene3D" id="3.30.200.20">
    <property type="entry name" value="Phosphorylase Kinase, domain 1"/>
    <property type="match status" value="1"/>
</dbReference>
<dbReference type="Gene3D" id="1.10.510.10">
    <property type="entry name" value="Transferase(Phosphotransferase) domain 1"/>
    <property type="match status" value="1"/>
</dbReference>
<dbReference type="InterPro" id="IPR011009">
    <property type="entry name" value="Kinase-like_dom_sf"/>
</dbReference>
<dbReference type="InterPro" id="IPR050117">
    <property type="entry name" value="MAP_kinase"/>
</dbReference>
<dbReference type="InterPro" id="IPR003527">
    <property type="entry name" value="MAP_kinase_CS"/>
</dbReference>
<dbReference type="InterPro" id="IPR038785">
    <property type="entry name" value="MAPK13"/>
</dbReference>
<dbReference type="InterPro" id="IPR008352">
    <property type="entry name" value="MAPK_p38-like"/>
</dbReference>
<dbReference type="InterPro" id="IPR000719">
    <property type="entry name" value="Prot_kinase_dom"/>
</dbReference>
<dbReference type="InterPro" id="IPR017441">
    <property type="entry name" value="Protein_kinase_ATP_BS"/>
</dbReference>
<dbReference type="PANTHER" id="PTHR24055">
    <property type="entry name" value="MITOGEN-ACTIVATED PROTEIN KINASE"/>
    <property type="match status" value="1"/>
</dbReference>
<dbReference type="Pfam" id="PF00069">
    <property type="entry name" value="Pkinase"/>
    <property type="match status" value="1"/>
</dbReference>
<dbReference type="PRINTS" id="PR01773">
    <property type="entry name" value="P38MAPKINASE"/>
</dbReference>
<dbReference type="SMART" id="SM00220">
    <property type="entry name" value="S_TKc"/>
    <property type="match status" value="1"/>
</dbReference>
<dbReference type="SUPFAM" id="SSF56112">
    <property type="entry name" value="Protein kinase-like (PK-like)"/>
    <property type="match status" value="1"/>
</dbReference>
<dbReference type="PROSITE" id="PS01351">
    <property type="entry name" value="MAPK"/>
    <property type="match status" value="1"/>
</dbReference>
<dbReference type="PROSITE" id="PS00107">
    <property type="entry name" value="PROTEIN_KINASE_ATP"/>
    <property type="match status" value="1"/>
</dbReference>
<dbReference type="PROSITE" id="PS50011">
    <property type="entry name" value="PROTEIN_KINASE_DOM"/>
    <property type="match status" value="1"/>
</dbReference>
<name>MK13_BOVIN</name>
<reference key="1">
    <citation type="submission" date="2005-08" db="EMBL/GenBank/DDBJ databases">
        <authorList>
            <consortium name="NIH - Mammalian Gene Collection (MGC) project"/>
        </authorList>
    </citation>
    <scope>NUCLEOTIDE SEQUENCE [LARGE SCALE MRNA]</scope>
    <source>
        <strain>Crossbred X Angus</strain>
        <tissue>Ileum</tissue>
    </source>
</reference>
<comment type="function">
    <text evidence="1">Serine/threonine kinase which acts as an essential component of the MAP kinase signal transduction pathway. MAPK13 is one of the four p38 MAPKs which play an important role in the cascades of cellular responses evoked by extracellular stimuli such as pro-inflammatory cytokines or physical stress leading to direct activation of transcription factors such as ELK1 and ATF2. Accordingly, p38 MAPKs phosphorylate a broad range of proteins and it has been estimated that they may have approximately 200 to 300 substrates each. MAPK13 is one of the less studied p38 MAPK isoforms. Some of the targets are downstream kinases such as MAPKAPK2, which are activated through phosphorylation and further phosphorylate additional targets. Plays a role in the regulation of protein translation by phosphorylating and inactivating EEF2K. Involved in cytoskeletal remodeling through phosphorylation of MAPT and STMN1. Mediates UV irradiation induced up-regulation of the gene expression of CXCL14. Plays an important role in the regulation of epidermal keratinocyte differentiation, apoptosis and skin tumor development. Phosphorylates the transcriptional activator MYB in response to stress which leads to rapid MYB degradation via a proteasome-dependent pathway. MAPK13 also phosphorylates and down-regulates PRKD1 during regulation of insulin secretion in pancreatic beta cells (By similarity).</text>
</comment>
<comment type="catalytic activity">
    <reaction>
        <text>L-seryl-[protein] + ATP = O-phospho-L-seryl-[protein] + ADP + H(+)</text>
        <dbReference type="Rhea" id="RHEA:17989"/>
        <dbReference type="Rhea" id="RHEA-COMP:9863"/>
        <dbReference type="Rhea" id="RHEA-COMP:11604"/>
        <dbReference type="ChEBI" id="CHEBI:15378"/>
        <dbReference type="ChEBI" id="CHEBI:29999"/>
        <dbReference type="ChEBI" id="CHEBI:30616"/>
        <dbReference type="ChEBI" id="CHEBI:83421"/>
        <dbReference type="ChEBI" id="CHEBI:456216"/>
        <dbReference type="EC" id="2.7.11.24"/>
    </reaction>
</comment>
<comment type="catalytic activity">
    <reaction>
        <text>L-threonyl-[protein] + ATP = O-phospho-L-threonyl-[protein] + ADP + H(+)</text>
        <dbReference type="Rhea" id="RHEA:46608"/>
        <dbReference type="Rhea" id="RHEA-COMP:11060"/>
        <dbReference type="Rhea" id="RHEA-COMP:11605"/>
        <dbReference type="ChEBI" id="CHEBI:15378"/>
        <dbReference type="ChEBI" id="CHEBI:30013"/>
        <dbReference type="ChEBI" id="CHEBI:30616"/>
        <dbReference type="ChEBI" id="CHEBI:61977"/>
        <dbReference type="ChEBI" id="CHEBI:456216"/>
        <dbReference type="EC" id="2.7.11.24"/>
    </reaction>
</comment>
<comment type="cofactor">
    <cofactor evidence="1">
        <name>Mg(2+)</name>
        <dbReference type="ChEBI" id="CHEBI:18420"/>
    </cofactor>
</comment>
<comment type="activity regulation">
    <text evidence="1">Activated by phosphorylation on threonine and tyrosine by dual specificity kinases, MAP2K3/MKK3 MAP2K6/MKK6, MAP2K4/MKK4 and MAP2K7/MKK7. Activation by ultraviolet radiation, hyperosmotic shock, anisomycin or by TNF-alpha is mediated by MAP2K3/MKK3. Inhibited by dual specificity phosphatase DUSP1 (By similarity).</text>
</comment>
<comment type="subunit">
    <text evidence="1">Interacts with MAPK8IP2.</text>
</comment>
<comment type="domain">
    <text>The TXY motif contains the threonine and tyrosine residues whose phosphorylation activates the MAP kinases.</text>
</comment>
<comment type="PTM">
    <text evidence="1">Dually phosphorylated on Thr-180 and Tyr-182 by MAP2K3/MKK3, MAP2K4/MKK4, MAP2K6/MKK6 and MAP2K7/MKK7, which activates the enzyme. Dephosphorylated by dual specificity phosphatase DUSP1 (By similarity).</text>
</comment>
<comment type="similarity">
    <text evidence="4">Belongs to the protein kinase superfamily. CMGC Ser/Thr protein kinase family. MAP kinase subfamily.</text>
</comment>
<sequence length="366" mass="42229">MSFTRKKGFYKQDVNKTAWELPKTYVSLTHIGSGAYGSVCSAIDKRSGEKVAIKKLSRPFQSEIFAKRAYRELLLLKHMQHENVIGLLDVFTPASSLRNFHDFYLVMPFMQTDLQKIMGMEFSEDKIQYLVYQMLKGLKYIHSAGVVHRDLKPGNLAVNEDCELKILDFGLARHTDVEMTGYVVTRWYRAPEVILSWMHYNQTVDIWSVGCIMAEMLTGKTLFKGKDYLDQLTQILKVTGVPGAEFVQKLNDKAAKSYIQSLPQSPKKDFSQLFPRASPQATDLLEKMLELDVDKRLTASQALAHPFFEPFRDPEEETEAQQPLEDSLEREKLIVDEWKQHIYKEIVNFSPIARKDSRRRSGMKLQ</sequence>
<accession>Q3T0N5</accession>
<gene>
    <name type="primary">MAPK13</name>
</gene>
<keyword id="KW-0067">ATP-binding</keyword>
<keyword id="KW-0131">Cell cycle</keyword>
<keyword id="KW-0418">Kinase</keyword>
<keyword id="KW-0547">Nucleotide-binding</keyword>
<keyword id="KW-0597">Phosphoprotein</keyword>
<keyword id="KW-1185">Reference proteome</keyword>
<keyword id="KW-0723">Serine/threonine-protein kinase</keyword>
<keyword id="KW-0346">Stress response</keyword>
<keyword id="KW-0804">Transcription</keyword>
<keyword id="KW-0805">Transcription regulation</keyword>
<keyword id="KW-0808">Transferase</keyword>
<organism>
    <name type="scientific">Bos taurus</name>
    <name type="common">Bovine</name>
    <dbReference type="NCBI Taxonomy" id="9913"/>
    <lineage>
        <taxon>Eukaryota</taxon>
        <taxon>Metazoa</taxon>
        <taxon>Chordata</taxon>
        <taxon>Craniata</taxon>
        <taxon>Vertebrata</taxon>
        <taxon>Euteleostomi</taxon>
        <taxon>Mammalia</taxon>
        <taxon>Eutheria</taxon>
        <taxon>Laurasiatheria</taxon>
        <taxon>Artiodactyla</taxon>
        <taxon>Ruminantia</taxon>
        <taxon>Pecora</taxon>
        <taxon>Bovidae</taxon>
        <taxon>Bovinae</taxon>
        <taxon>Bos</taxon>
    </lineage>
</organism>